<organism>
    <name type="scientific">Aspergillus fumigatus (strain ATCC MYA-4609 / CBS 101355 / FGSC A1100 / Af293)</name>
    <name type="common">Neosartorya fumigata</name>
    <dbReference type="NCBI Taxonomy" id="330879"/>
    <lineage>
        <taxon>Eukaryota</taxon>
        <taxon>Fungi</taxon>
        <taxon>Dikarya</taxon>
        <taxon>Ascomycota</taxon>
        <taxon>Pezizomycotina</taxon>
        <taxon>Eurotiomycetes</taxon>
        <taxon>Eurotiomycetidae</taxon>
        <taxon>Eurotiales</taxon>
        <taxon>Aspergillaceae</taxon>
        <taxon>Aspergillus</taxon>
        <taxon>Aspergillus subgen. Fumigati</taxon>
    </lineage>
</organism>
<evidence type="ECO:0000250" key="1">
    <source>
        <dbReference type="UniProtKB" id="Q59UT4"/>
    </source>
</evidence>
<evidence type="ECO:0000250" key="2">
    <source>
        <dbReference type="UniProtKB" id="Q5A0X8"/>
    </source>
</evidence>
<evidence type="ECO:0000255" key="3"/>
<evidence type="ECO:0000255" key="4">
    <source>
        <dbReference type="PROSITE-ProRule" id="PRU01356"/>
    </source>
</evidence>
<evidence type="ECO:0000256" key="5">
    <source>
        <dbReference type="SAM" id="MobiDB-lite"/>
    </source>
</evidence>
<evidence type="ECO:0000269" key="6">
    <source>
    </source>
</evidence>
<evidence type="ECO:0000269" key="7">
    <source>
    </source>
</evidence>
<evidence type="ECO:0000269" key="8">
    <source>
    </source>
</evidence>
<evidence type="ECO:0000303" key="9">
    <source>
    </source>
</evidence>
<evidence type="ECO:0000305" key="10"/>
<sequence>MKASVSLLLLSAASMASAAMSVSQCAQMCLSNMKAKAGELGCSAGDDKCLCSQANYGYGIRDCTTEACPDDDAIAVLSSALSSCPSDSAAVTATGAGGSSSGSGSGSDSGSGSGSGSGSGSGSGSGSGSSSGSGSGSGSGSGSGSGSNSGSGSASSTATGTATGTATGTATGTATGTATGSENSTTGGAGAGAGAGASSTGTNASGTGATTSGANPSNTGATTTDTTLTTTTTSSENGSSTGNSSSETGAGSGSSTATGSGSGSGAGSASTTAPNSSSTGNVAPRGAVVGSGAVGALALAALIIL</sequence>
<comment type="function">
    <text evidence="8">GPI-anchored cell wall protein involved in stabilizing the cell wall. Not implicated in virulence, heme uptake and biofilm formation.</text>
</comment>
<comment type="subcellular location">
    <subcellularLocation>
        <location evidence="1">Secreted</location>
        <location evidence="1">Cell wall</location>
    </subcellularLocation>
    <subcellularLocation>
        <location evidence="6">Cell membrane</location>
        <topology evidence="6 7">Lipid-anchor</topology>
        <topology evidence="6 7">GPI-anchor</topology>
    </subcellularLocation>
    <text evidence="1">Found anchored in the cell membrane as well as a covalently-linked GPI-modified cell wall protein (GPI-CWP).</text>
</comment>
<comment type="domain">
    <text evidence="2">The CFEM domain is involved in heme-binding and contains 8 cysteines and is found in proteins from several pathogenic fungi, including both human and plant pathogens (By similarity). The CFEM domain adopts a novel helical-basket fold that consists of six alpha-helices, and is uniquely stabilized by four disulfide bonds formed by its 8 signature cysteines (By similarity).</text>
</comment>
<comment type="PTM">
    <text evidence="7">The GPI-like anchor contains a phosphoceramide lipid group.</text>
</comment>
<comment type="PTM">
    <text evidence="10">The GPI-anchor is attached to the protein in the endoplasmic reticulum and serves to target the protein to the cell surface. There, the glucosamine-inositol phospholipid moiety is cleaved off and the GPI-modified mannoprotein is covalently attached via its lipidless GPI glycan remnant to the 1,6-beta-glucan of the outer cell wall layer.</text>
</comment>
<comment type="disruption phenotype">
    <text evidence="8">Increases susceptibility towards the chitin/beta-glucan-microfibril destabilizing compounds Congo red and calcofluor white.</text>
</comment>
<comment type="similarity">
    <text evidence="10">Belongs to the RBT5 family.</text>
</comment>
<keyword id="KW-1003">Cell membrane</keyword>
<keyword id="KW-0134">Cell wall</keyword>
<keyword id="KW-0903">Direct protein sequencing</keyword>
<keyword id="KW-1015">Disulfide bond</keyword>
<keyword id="KW-0325">Glycoprotein</keyword>
<keyword id="KW-0336">GPI-anchor</keyword>
<keyword id="KW-0349">Heme</keyword>
<keyword id="KW-0408">Iron</keyword>
<keyword id="KW-0449">Lipoprotein</keyword>
<keyword id="KW-0472">Membrane</keyword>
<keyword id="KW-0479">Metal-binding</keyword>
<keyword id="KW-0597">Phosphoprotein</keyword>
<keyword id="KW-1185">Reference proteome</keyword>
<keyword id="KW-0964">Secreted</keyword>
<keyword id="KW-0732">Signal</keyword>
<proteinExistence type="evidence at protein level"/>
<dbReference type="EMBL" id="AAHF01000006">
    <property type="protein sequence ID" value="EAL89245.1"/>
    <property type="molecule type" value="Genomic_DNA"/>
</dbReference>
<dbReference type="RefSeq" id="XP_751283.1">
    <property type="nucleotide sequence ID" value="XM_746190.1"/>
</dbReference>
<dbReference type="GlyCosmos" id="Q4WLB9">
    <property type="glycosylation" value="5 sites, No reported glycans"/>
</dbReference>
<dbReference type="EnsemblFungi" id="EAL89245">
    <property type="protein sequence ID" value="EAL89245"/>
    <property type="gene ID" value="AFUA_6G14090"/>
</dbReference>
<dbReference type="GeneID" id="3508600"/>
<dbReference type="KEGG" id="afm:AFUA_6G14090"/>
<dbReference type="VEuPathDB" id="FungiDB:Afu6g14090"/>
<dbReference type="eggNOG" id="ENOG502S1H2">
    <property type="taxonomic scope" value="Eukaryota"/>
</dbReference>
<dbReference type="HOGENOM" id="CLU_063084_0_0_1"/>
<dbReference type="InParanoid" id="Q4WLB9"/>
<dbReference type="OMA" id="VSDCAQM"/>
<dbReference type="OrthoDB" id="1193027at2759"/>
<dbReference type="PHI-base" id="PHI:4015"/>
<dbReference type="Proteomes" id="UP000002530">
    <property type="component" value="Chromosome 6"/>
</dbReference>
<dbReference type="GO" id="GO:0005576">
    <property type="term" value="C:extracellular region"/>
    <property type="evidence" value="ECO:0007669"/>
    <property type="project" value="UniProtKB-KW"/>
</dbReference>
<dbReference type="GO" id="GO:0009277">
    <property type="term" value="C:fungal-type cell wall"/>
    <property type="evidence" value="ECO:0000314"/>
    <property type="project" value="AspGD"/>
</dbReference>
<dbReference type="GO" id="GO:0005886">
    <property type="term" value="C:plasma membrane"/>
    <property type="evidence" value="ECO:0007669"/>
    <property type="project" value="UniProtKB-SubCell"/>
</dbReference>
<dbReference type="GO" id="GO:0098552">
    <property type="term" value="C:side of membrane"/>
    <property type="evidence" value="ECO:0007669"/>
    <property type="project" value="UniProtKB-KW"/>
</dbReference>
<dbReference type="GO" id="GO:0046872">
    <property type="term" value="F:metal ion binding"/>
    <property type="evidence" value="ECO:0007669"/>
    <property type="project" value="UniProtKB-KW"/>
</dbReference>
<dbReference type="InterPro" id="IPR051735">
    <property type="entry name" value="CFEM_domain"/>
</dbReference>
<dbReference type="InterPro" id="IPR008427">
    <property type="entry name" value="Extracellular_membr_CFEM_dom"/>
</dbReference>
<dbReference type="PANTHER" id="PTHR37928">
    <property type="entry name" value="CFEM DOMAIN PROTEIN (AFU_ORTHOLOGUE AFUA_6G14090)"/>
    <property type="match status" value="1"/>
</dbReference>
<dbReference type="PANTHER" id="PTHR37928:SF1">
    <property type="entry name" value="CFEM DOMAIN PROTEIN (AFU_ORTHOLOGUE AFUA_6G14090)"/>
    <property type="match status" value="1"/>
</dbReference>
<dbReference type="Pfam" id="PF05730">
    <property type="entry name" value="CFEM"/>
    <property type="match status" value="1"/>
</dbReference>
<dbReference type="SMART" id="SM00747">
    <property type="entry name" value="CFEM"/>
    <property type="match status" value="1"/>
</dbReference>
<dbReference type="PROSITE" id="PS52012">
    <property type="entry name" value="CFEM"/>
    <property type="match status" value="1"/>
</dbReference>
<gene>
    <name evidence="9" type="primary">cfmA</name>
    <name type="ORF">AFUA_6G14090</name>
</gene>
<name>CFMA_ASPFU</name>
<feature type="signal peptide" evidence="3">
    <location>
        <begin position="1"/>
        <end position="18"/>
    </location>
</feature>
<feature type="chain" id="PRO_0000245562" description="GPI-anchored hemophore cfmA">
    <location>
        <begin position="19"/>
        <end position="276"/>
    </location>
</feature>
<feature type="propeptide" id="PRO_0000245563" description="Removed in mature form" evidence="3">
    <location>
        <begin position="277"/>
        <end position="305"/>
    </location>
</feature>
<feature type="domain" description="CFEM" evidence="4">
    <location>
        <begin position="19"/>
        <end position="111"/>
    </location>
</feature>
<feature type="region of interest" description="Disordered" evidence="5">
    <location>
        <begin position="92"/>
        <end position="287"/>
    </location>
</feature>
<feature type="compositionally biased region" description="Gly residues" evidence="5">
    <location>
        <begin position="95"/>
        <end position="149"/>
    </location>
</feature>
<feature type="compositionally biased region" description="Low complexity" evidence="5">
    <location>
        <begin position="150"/>
        <end position="186"/>
    </location>
</feature>
<feature type="compositionally biased region" description="Low complexity" evidence="5">
    <location>
        <begin position="196"/>
        <end position="259"/>
    </location>
</feature>
<feature type="compositionally biased region" description="Low complexity" evidence="5">
    <location>
        <begin position="267"/>
        <end position="287"/>
    </location>
</feature>
<feature type="binding site" description="axial binding residue" evidence="4">
    <location>
        <position position="46"/>
    </location>
    <ligand>
        <name>heme</name>
        <dbReference type="ChEBI" id="CHEBI:30413"/>
    </ligand>
    <ligandPart>
        <name>Fe</name>
        <dbReference type="ChEBI" id="CHEBI:18248"/>
    </ligandPart>
</feature>
<feature type="lipid moiety-binding region" description="GPI-like-anchor amidated serine" evidence="3">
    <location>
        <position position="276"/>
    </location>
</feature>
<feature type="glycosylation site" description="N-linked (GlcNAc...) asparagine" evidence="3">
    <location>
        <position position="183"/>
    </location>
</feature>
<feature type="glycosylation site" description="N-linked (GlcNAc...) asparagine" evidence="3">
    <location>
        <position position="203"/>
    </location>
</feature>
<feature type="glycosylation site" description="N-linked (GlcNAc...) asparagine" evidence="3">
    <location>
        <position position="237"/>
    </location>
</feature>
<feature type="glycosylation site" description="N-linked (GlcNAc...) asparagine" evidence="3">
    <location>
        <position position="243"/>
    </location>
</feature>
<feature type="glycosylation site" description="N-linked (GlcNAc...) asparagine" evidence="3">
    <location>
        <position position="275"/>
    </location>
</feature>
<feature type="disulfide bond" evidence="4">
    <location>
        <begin position="25"/>
        <end position="68"/>
    </location>
</feature>
<feature type="disulfide bond" evidence="4">
    <location>
        <begin position="29"/>
        <end position="63"/>
    </location>
</feature>
<feature type="disulfide bond" evidence="4">
    <location>
        <begin position="42"/>
        <end position="49"/>
    </location>
</feature>
<feature type="disulfide bond" evidence="4">
    <location>
        <begin position="51"/>
        <end position="84"/>
    </location>
</feature>
<accession>Q4WLB9</accession>
<reference key="1">
    <citation type="journal article" date="2005" name="Nature">
        <title>Genomic sequence of the pathogenic and allergenic filamentous fungus Aspergillus fumigatus.</title>
        <authorList>
            <person name="Nierman W.C."/>
            <person name="Pain A."/>
            <person name="Anderson M.J."/>
            <person name="Wortman J.R."/>
            <person name="Kim H.S."/>
            <person name="Arroyo J."/>
            <person name="Berriman M."/>
            <person name="Abe K."/>
            <person name="Archer D.B."/>
            <person name="Bermejo C."/>
            <person name="Bennett J.W."/>
            <person name="Bowyer P."/>
            <person name="Chen D."/>
            <person name="Collins M."/>
            <person name="Coulsen R."/>
            <person name="Davies R."/>
            <person name="Dyer P.S."/>
            <person name="Farman M.L."/>
            <person name="Fedorova N."/>
            <person name="Fedorova N.D."/>
            <person name="Feldblyum T.V."/>
            <person name="Fischer R."/>
            <person name="Fosker N."/>
            <person name="Fraser A."/>
            <person name="Garcia J.L."/>
            <person name="Garcia M.J."/>
            <person name="Goble A."/>
            <person name="Goldman G.H."/>
            <person name="Gomi K."/>
            <person name="Griffith-Jones S."/>
            <person name="Gwilliam R."/>
            <person name="Haas B.J."/>
            <person name="Haas H."/>
            <person name="Harris D.E."/>
            <person name="Horiuchi H."/>
            <person name="Huang J."/>
            <person name="Humphray S."/>
            <person name="Jimenez J."/>
            <person name="Keller N."/>
            <person name="Khouri H."/>
            <person name="Kitamoto K."/>
            <person name="Kobayashi T."/>
            <person name="Konzack S."/>
            <person name="Kulkarni R."/>
            <person name="Kumagai T."/>
            <person name="Lafton A."/>
            <person name="Latge J.-P."/>
            <person name="Li W."/>
            <person name="Lord A."/>
            <person name="Lu C."/>
            <person name="Majoros W.H."/>
            <person name="May G.S."/>
            <person name="Miller B.L."/>
            <person name="Mohamoud Y."/>
            <person name="Molina M."/>
            <person name="Monod M."/>
            <person name="Mouyna I."/>
            <person name="Mulligan S."/>
            <person name="Murphy L.D."/>
            <person name="O'Neil S."/>
            <person name="Paulsen I."/>
            <person name="Penalva M.A."/>
            <person name="Pertea M."/>
            <person name="Price C."/>
            <person name="Pritchard B.L."/>
            <person name="Quail M.A."/>
            <person name="Rabbinowitsch E."/>
            <person name="Rawlins N."/>
            <person name="Rajandream M.A."/>
            <person name="Reichard U."/>
            <person name="Renauld H."/>
            <person name="Robson G.D."/>
            <person name="Rodriguez de Cordoba S."/>
            <person name="Rodriguez-Pena J.M."/>
            <person name="Ronning C.M."/>
            <person name="Rutter S."/>
            <person name="Salzberg S.L."/>
            <person name="Sanchez M."/>
            <person name="Sanchez-Ferrero J.C."/>
            <person name="Saunders D."/>
            <person name="Seeger K."/>
            <person name="Squares R."/>
            <person name="Squares S."/>
            <person name="Takeuchi M."/>
            <person name="Tekaia F."/>
            <person name="Turner G."/>
            <person name="Vazquez de Aldana C.R."/>
            <person name="Weidman J."/>
            <person name="White O."/>
            <person name="Woodward J.R."/>
            <person name="Yu J.-H."/>
            <person name="Fraser C.M."/>
            <person name="Galagan J.E."/>
            <person name="Asai K."/>
            <person name="Machida M."/>
            <person name="Hall N."/>
            <person name="Barrell B.G."/>
            <person name="Denning D.W."/>
        </authorList>
    </citation>
    <scope>NUCLEOTIDE SEQUENCE [LARGE SCALE GENOMIC DNA]</scope>
    <source>
        <strain>ATCC MYA-4609 / CBS 101355 / FGSC A1100 / Af293</strain>
    </source>
</reference>
<reference key="2">
    <citation type="journal article" date="2001" name="Electrophoresis">
        <title>Proteome analysis of Aspergillus fumigatus identifies glycosylphosphatidylinositol-anchored proteins associated to the cell wall biosynthesis.</title>
        <authorList>
            <person name="Bruneau J.-M."/>
            <person name="Magnin T."/>
            <person name="Tagat E."/>
            <person name="Legrand R."/>
            <person name="Bernard M."/>
            <person name="Diaquin M."/>
            <person name="Fudali C."/>
            <person name="Latge J.-P."/>
        </authorList>
    </citation>
    <scope>PROTEIN SEQUENCE OF 49-61</scope>
    <scope>GPI-ANCHOR</scope>
    <scope>SUBCELLULAR LOCATION</scope>
</reference>
<reference key="3">
    <citation type="journal article" date="2003" name="Glycobiology">
        <title>Structures of the glycosylphosphatidylinositol membrane anchors from Aspergillus fumigatus membrane proteins.</title>
        <authorList>
            <person name="Fontaine T."/>
            <person name="Magnin T."/>
            <person name="Melhert A."/>
            <person name="Lamont D."/>
            <person name="Latge J.-P."/>
            <person name="Ferguson M.A.J."/>
        </authorList>
    </citation>
    <scope>STRUCTURE OF GPI-ANCHOR</scope>
</reference>
<reference key="4">
    <citation type="journal article" date="2014" name="Fungal Genet. Biol.">
        <title>The three Aspergillus fumigatus CFEM-domain GPI-anchored proteins (CfmA-C) affect cell-wall stability but do not play a role in fungal virulence.</title>
        <authorList>
            <person name="Vaknin Y."/>
            <person name="Shadkchan Y."/>
            <person name="Levdansky E."/>
            <person name="Morozov M."/>
            <person name="Romano J."/>
            <person name="Osherov N."/>
        </authorList>
    </citation>
    <scope>DISRUPTION PHENOTYPE</scope>
    <scope>FUNCTION</scope>
</reference>
<protein>
    <recommendedName>
        <fullName evidence="10">GPI-anchored hemophore cfmA</fullName>
    </recommendedName>
    <alternativeName>
        <fullName evidence="9">GPI-anchored CFEM domain protein A</fullName>
    </alternativeName>
</protein>